<keyword id="KW-1003">Cell membrane</keyword>
<keyword id="KW-0175">Coiled coil</keyword>
<keyword id="KW-0256">Endoplasmic reticulum</keyword>
<keyword id="KW-0445">Lipid transport</keyword>
<keyword id="KW-0446">Lipid-binding</keyword>
<keyword id="KW-0472">Membrane</keyword>
<keyword id="KW-0597">Phosphoprotein</keyword>
<keyword id="KW-1185">Reference proteome</keyword>
<keyword id="KW-0677">Repeat</keyword>
<keyword id="KW-0812">Transmembrane</keyword>
<keyword id="KW-1133">Transmembrane helix</keyword>
<keyword id="KW-0813">Transport</keyword>
<dbReference type="EMBL" id="DQ115393">
    <property type="protein sequence ID" value="AAZ22521.1"/>
    <property type="molecule type" value="Genomic_DNA"/>
</dbReference>
<dbReference type="EMBL" id="X89016">
    <property type="protein sequence ID" value="CAA61423.1"/>
    <property type="molecule type" value="Genomic_DNA"/>
</dbReference>
<dbReference type="EMBL" id="Z71363">
    <property type="protein sequence ID" value="CAA95963.1"/>
    <property type="molecule type" value="Genomic_DNA"/>
</dbReference>
<dbReference type="EMBL" id="BK006947">
    <property type="protein sequence ID" value="DAA10458.1"/>
    <property type="molecule type" value="Genomic_DNA"/>
</dbReference>
<dbReference type="PIR" id="S57535">
    <property type="entry name" value="S57535"/>
</dbReference>
<dbReference type="RefSeq" id="NP_014312.1">
    <property type="nucleotide sequence ID" value="NM_001182925.1"/>
</dbReference>
<dbReference type="SMR" id="P48231"/>
<dbReference type="BioGRID" id="35736">
    <property type="interactions" value="116"/>
</dbReference>
<dbReference type="DIP" id="DIP-2709N"/>
<dbReference type="FunCoup" id="P48231">
    <property type="interactions" value="106"/>
</dbReference>
<dbReference type="IntAct" id="P48231">
    <property type="interactions" value="7"/>
</dbReference>
<dbReference type="MINT" id="P48231"/>
<dbReference type="STRING" id="4932.YNL087W"/>
<dbReference type="TCDB" id="9.A.57.1.11">
    <property type="family name" value="the extended-synaptotagmin (e-syt) family"/>
</dbReference>
<dbReference type="iPTMnet" id="P48231"/>
<dbReference type="PaxDb" id="4932-YNL087W"/>
<dbReference type="PeptideAtlas" id="P48231"/>
<dbReference type="EnsemblFungi" id="YNL087W_mRNA">
    <property type="protein sequence ID" value="YNL087W"/>
    <property type="gene ID" value="YNL087W"/>
</dbReference>
<dbReference type="GeneID" id="855637"/>
<dbReference type="KEGG" id="sce:YNL087W"/>
<dbReference type="AGR" id="SGD:S000005031"/>
<dbReference type="SGD" id="S000005031">
    <property type="gene designation" value="TCB2"/>
</dbReference>
<dbReference type="VEuPathDB" id="FungiDB:YNL087W"/>
<dbReference type="eggNOG" id="KOG1012">
    <property type="taxonomic scope" value="Eukaryota"/>
</dbReference>
<dbReference type="GeneTree" id="ENSGT00940000176636"/>
<dbReference type="HOGENOM" id="CLU_001661_1_0_1"/>
<dbReference type="InParanoid" id="P48231"/>
<dbReference type="OMA" id="VLMDDYM"/>
<dbReference type="OrthoDB" id="1029639at2759"/>
<dbReference type="BioCyc" id="YEAST:G3O-33116-MONOMER"/>
<dbReference type="BioGRID-ORCS" id="855637">
    <property type="hits" value="0 hits in 10 CRISPR screens"/>
</dbReference>
<dbReference type="PRO" id="PR:P48231"/>
<dbReference type="Proteomes" id="UP000002311">
    <property type="component" value="Chromosome XIV"/>
</dbReference>
<dbReference type="RNAct" id="P48231">
    <property type="molecule type" value="protein"/>
</dbReference>
<dbReference type="GO" id="GO:0071944">
    <property type="term" value="C:cell periphery"/>
    <property type="evidence" value="ECO:0007005"/>
    <property type="project" value="SGD"/>
</dbReference>
<dbReference type="GO" id="GO:0005933">
    <property type="term" value="C:cellular bud"/>
    <property type="evidence" value="ECO:0000314"/>
    <property type="project" value="SGD"/>
</dbReference>
<dbReference type="GO" id="GO:0032541">
    <property type="term" value="C:cortical endoplasmic reticulum"/>
    <property type="evidence" value="ECO:0000314"/>
    <property type="project" value="SGD"/>
</dbReference>
<dbReference type="GO" id="GO:0005783">
    <property type="term" value="C:endoplasmic reticulum"/>
    <property type="evidence" value="ECO:0007005"/>
    <property type="project" value="SGD"/>
</dbReference>
<dbReference type="GO" id="GO:0005789">
    <property type="term" value="C:endoplasmic reticulum membrane"/>
    <property type="evidence" value="ECO:0007669"/>
    <property type="project" value="UniProtKB-SubCell"/>
</dbReference>
<dbReference type="GO" id="GO:0005886">
    <property type="term" value="C:plasma membrane"/>
    <property type="evidence" value="ECO:0000318"/>
    <property type="project" value="GO_Central"/>
</dbReference>
<dbReference type="GO" id="GO:0008289">
    <property type="term" value="F:lipid binding"/>
    <property type="evidence" value="ECO:0000314"/>
    <property type="project" value="SGD"/>
</dbReference>
<dbReference type="GO" id="GO:0090158">
    <property type="term" value="P:endoplasmic reticulum membrane organization"/>
    <property type="evidence" value="ECO:0000316"/>
    <property type="project" value="SGD"/>
</dbReference>
<dbReference type="GO" id="GO:0061817">
    <property type="term" value="P:endoplasmic reticulum-plasma membrane tethering"/>
    <property type="evidence" value="ECO:0007669"/>
    <property type="project" value="InterPro"/>
</dbReference>
<dbReference type="GO" id="GO:0035621">
    <property type="term" value="P:ER to Golgi ceramide transport"/>
    <property type="evidence" value="ECO:0000315"/>
    <property type="project" value="SGD"/>
</dbReference>
<dbReference type="GO" id="GO:0055091">
    <property type="term" value="P:phospholipid homeostasis"/>
    <property type="evidence" value="ECO:0000316"/>
    <property type="project" value="SGD"/>
</dbReference>
<dbReference type="GO" id="GO:0060304">
    <property type="term" value="P:regulation of phosphatidylinositol dephosphorylation"/>
    <property type="evidence" value="ECO:0000316"/>
    <property type="project" value="SGD"/>
</dbReference>
<dbReference type="CDD" id="cd04044">
    <property type="entry name" value="C2A_Tricalbin-like"/>
    <property type="match status" value="1"/>
</dbReference>
<dbReference type="CDD" id="cd04052">
    <property type="entry name" value="C2B_Tricalbin-like"/>
    <property type="match status" value="1"/>
</dbReference>
<dbReference type="CDD" id="cd04045">
    <property type="entry name" value="C2C_Tricalbin-like"/>
    <property type="match status" value="1"/>
</dbReference>
<dbReference type="CDD" id="cd04040">
    <property type="entry name" value="C2D_Tricalbin-like"/>
    <property type="match status" value="1"/>
</dbReference>
<dbReference type="CDD" id="cd21678">
    <property type="entry name" value="SMP_TCB"/>
    <property type="match status" value="1"/>
</dbReference>
<dbReference type="FunFam" id="2.60.40.150:FF:000217">
    <property type="entry name" value="Tcb1p"/>
    <property type="match status" value="1"/>
</dbReference>
<dbReference type="FunFam" id="2.60.40.150:FF:000226">
    <property type="entry name" value="Tcb1p"/>
    <property type="match status" value="1"/>
</dbReference>
<dbReference type="FunFam" id="2.60.40.150:FF:000230">
    <property type="entry name" value="Tcb1p"/>
    <property type="match status" value="1"/>
</dbReference>
<dbReference type="Gene3D" id="2.60.40.150">
    <property type="entry name" value="C2 domain"/>
    <property type="match status" value="3"/>
</dbReference>
<dbReference type="InterPro" id="IPR000008">
    <property type="entry name" value="C2_dom"/>
</dbReference>
<dbReference type="InterPro" id="IPR035892">
    <property type="entry name" value="C2_domain_sf"/>
</dbReference>
<dbReference type="InterPro" id="IPR037761">
    <property type="entry name" value="C2A_Tricalbin"/>
</dbReference>
<dbReference type="InterPro" id="IPR037765">
    <property type="entry name" value="C2B_Tricalbin"/>
</dbReference>
<dbReference type="InterPro" id="IPR037762">
    <property type="entry name" value="C2C_Tricalbin"/>
</dbReference>
<dbReference type="InterPro" id="IPR037756">
    <property type="entry name" value="C2D_Tricalbin"/>
</dbReference>
<dbReference type="InterPro" id="IPR031468">
    <property type="entry name" value="SMP_LBD"/>
</dbReference>
<dbReference type="InterPro" id="IPR056910">
    <property type="entry name" value="TCB1-3_C2"/>
</dbReference>
<dbReference type="InterPro" id="IPR017147">
    <property type="entry name" value="Tricalbin"/>
</dbReference>
<dbReference type="InterPro" id="IPR052455">
    <property type="entry name" value="Tricalbin_domain"/>
</dbReference>
<dbReference type="PANTHER" id="PTHR46980">
    <property type="entry name" value="TRICALBIN-1-RELATED"/>
    <property type="match status" value="1"/>
</dbReference>
<dbReference type="PANTHER" id="PTHR46980:SF2">
    <property type="entry name" value="TRICALBIN-1-RELATED"/>
    <property type="match status" value="1"/>
</dbReference>
<dbReference type="Pfam" id="PF00168">
    <property type="entry name" value="C2"/>
    <property type="match status" value="3"/>
</dbReference>
<dbReference type="Pfam" id="PF24920">
    <property type="entry name" value="C2_TCB1"/>
    <property type="match status" value="1"/>
</dbReference>
<dbReference type="PIRSF" id="PIRSF037232">
    <property type="entry name" value="Tricalbin"/>
    <property type="match status" value="1"/>
</dbReference>
<dbReference type="PRINTS" id="PR00360">
    <property type="entry name" value="C2DOMAIN"/>
</dbReference>
<dbReference type="SMART" id="SM00239">
    <property type="entry name" value="C2"/>
    <property type="match status" value="4"/>
</dbReference>
<dbReference type="SUPFAM" id="SSF49562">
    <property type="entry name" value="C2 domain (Calcium/lipid-binding domain, CaLB)"/>
    <property type="match status" value="4"/>
</dbReference>
<dbReference type="PROSITE" id="PS50004">
    <property type="entry name" value="C2"/>
    <property type="match status" value="4"/>
</dbReference>
<dbReference type="PROSITE" id="PS51847">
    <property type="entry name" value="SMP"/>
    <property type="match status" value="1"/>
</dbReference>
<comment type="function">
    <text evidence="9 10">May play a role in membrane trafficking.</text>
</comment>
<comment type="subunit">
    <text evidence="10">Interacts with TCB1 and TCB3 via its C-terminal domain.</text>
</comment>
<comment type="interaction">
    <interactant intactId="EBI-28779">
        <id>P48231</id>
    </interactant>
    <interactant intactId="EBI-34614">
        <id>Q12466</id>
        <label>TCB1</label>
    </interactant>
    <organismsDiffer>false</organismsDiffer>
    <experiments>2</experiments>
</comment>
<comment type="subcellular location">
    <subcellularLocation>
        <location evidence="7 10">Cell membrane</location>
        <topology evidence="3">Multi-pass membrane protein</topology>
    </subcellularLocation>
    <subcellularLocation>
        <location evidence="12">Endoplasmic reticulum membrane</location>
        <topology evidence="3">Multi-pass membrane protein</topology>
    </subcellularLocation>
    <text evidence="10 12">Traffics from the cell surface to intracellular vesicles near the vacuole (PubMed:15141306). More enriched in the cortical endoplasmic reticulum (ER) that is closely apposed to the cell membrane than in the perinuclear ER or internal ER tubules that connect the nucleus to the cortical ER (PubMed:22250200).</text>
</comment>
<comment type="domain">
    <text evidence="5 12">The SMP-LTD domain is a barrel-like domain that can bind various types of glycerophospholipids in its interior and mediate their transfer between two adjacent bilayers.</text>
</comment>
<comment type="domain">
    <text>The C2 domains show Ca(2+)-independent phospholipid binding. None of the C2 domains retains all 5 conserved Asp residues found in calcium-binding C2 domains.</text>
</comment>
<comment type="miscellaneous">
    <text evidence="8">Present with 2630 molecules/cell in log phase SD medium.</text>
</comment>
<comment type="similarity">
    <text evidence="13">Belongs to the tricalbin family.</text>
</comment>
<sequence length="1178" mass="132509">MSPNSSKTRTDQISSMPGINEATKVESKNVVKDAVPIKSEVETNGTSIVREKQDPSYVGWKQVGGWEEKDELTSEDLLVDVNKDTFLGNLLPDKFYGDWYHEVAILIIAGLCSFVLGYFKFSLASVLIVMLTTGMLYRTSSKKYRESLRDLAQKEQTVEKITSDYESVEWLNTFLDKYWPIIEPSVSQQIVDGTNTALSENVAIPKFIKAIWLDQFTLGVKPPRIDAIKTFQNTKSDVVVMDVCLSFTPHDMSDLDAKQCRNYVNSNVVLKAKIFGMDIPVSVADIFFQVFVRFRFQLMTTLPLVETINIQLLEVPEVDFISRLLGNSVFNWEILAIPGLMRLIQKMAFKYLSPVLLPPFSLQLNIPQLLSKTGLPIGVLEIKVKNAHGLRKLVGMIKKTVDPYLTFELSGKIVGKTKVFKNSANPVWNESIYILLQSFTDPLTIAVYDKRETLSDKKMGTVIFNLNKLHANHYHKNEKVHFLRNSKPVGELTFDLRFFPTIEPKKLLNGDEEPLPDMNTGITKITIRELKGLDELSDKKFVFAELYVNAELVMTTKKEKRTAHLKWNSDYYSVVTDRRKTICRFVLKDQSGKVISSSVQPLNHLIDRTEVNKEWIPLRNGKGELKVTTYWRPVDIDLGLKSVGYTTPIGMLRVFINKAENLRNPDSLGKISPYAKVSVNGVARGRTNERIETLNPIWNQSIYVSVTSPLQKVSIDCFGIDTNGDDHNLGSLNIQTQNIYHKDNDDKYTIFIDNAPRTGNLIGKKGVKGTVTYYLSFYPVVPVLSLEEAKEVDEINEKKDKLEKQKSTLDDKNISKEEKERIKKEEFRLTEKYDMYSYKMKLDLDELLQYNAGVLGVTVLGGELPQPGLYVQTFFDSCGYAAITSAKNAIRTIKTGWSGDFMIKELEWSVTTFRVTKTKDANKAENFICEVNIPTIELVRNCYYKPSVLNLIGKKSAKLLVQVSWFPVTATELPQSDLITNSGDLKITAKSAENLIGVNKNGYSDPYVEFFLNEKSTSPFFKTAVQKKTLNPTWNESKTIEVSNRVNDYLTINVKDYESTNSNRSIGKAVVPLSTIDPESDTTFNIPLVGPKGEDGGVLHLEFEFEPRYTTNVVKREAGLGNFATKGLGTGIKAGSTVFALGTNVVSTGLGTIDKVKAGVFGGKKSTTTGDKKSEEKQ</sequence>
<feature type="chain" id="PRO_0000203444" description="Tricalbin-2">
    <location>
        <begin position="1"/>
        <end position="1178"/>
    </location>
</feature>
<feature type="topological domain" description="Cytoplasmic" evidence="1">
    <location>
        <begin position="1"/>
        <end position="98"/>
    </location>
</feature>
<feature type="transmembrane region" description="Helical" evidence="3">
    <location>
        <begin position="99"/>
        <end position="119"/>
    </location>
</feature>
<feature type="topological domain" description="Extracellular" evidence="1">
    <location>
        <position position="120"/>
    </location>
</feature>
<feature type="transmembrane region" description="Helical" evidence="3">
    <location>
        <begin position="121"/>
        <end position="141"/>
    </location>
</feature>
<feature type="topological domain" description="Cytoplasmic" evidence="1">
    <location>
        <begin position="142"/>
        <end position="1178"/>
    </location>
</feature>
<feature type="domain" description="SMP-LTD" evidence="5">
    <location>
        <begin position="164"/>
        <end position="367"/>
    </location>
</feature>
<feature type="domain" description="C2 1" evidence="4">
    <location>
        <begin position="358"/>
        <end position="481"/>
    </location>
</feature>
<feature type="domain" description="C2 2" evidence="4">
    <location>
        <begin position="504"/>
        <end position="628"/>
    </location>
</feature>
<feature type="domain" description="C2 3" evidence="4">
    <location>
        <begin position="632"/>
        <end position="749"/>
    </location>
</feature>
<feature type="domain" description="C2 4" evidence="4">
    <location>
        <begin position="962"/>
        <end position="1086"/>
    </location>
</feature>
<feature type="region of interest" description="Disordered" evidence="6">
    <location>
        <begin position="1"/>
        <end position="27"/>
    </location>
</feature>
<feature type="coiled-coil region" evidence="3">
    <location>
        <begin position="784"/>
        <end position="821"/>
    </location>
</feature>
<feature type="compositionally biased region" description="Polar residues" evidence="6">
    <location>
        <begin position="1"/>
        <end position="17"/>
    </location>
</feature>
<feature type="modified residue" description="Phosphoserine" evidence="2">
    <location>
        <position position="991"/>
    </location>
</feature>
<feature type="sequence variant" description="In strain: SK1." evidence="11">
    <original>DQI</original>
    <variation>EQV</variation>
    <location>
        <begin position="11"/>
        <end position="13"/>
    </location>
</feature>
<feature type="sequence variant" description="In strain: SK1." evidence="11">
    <original>F</original>
    <variation>S</variation>
    <location>
        <position position="121"/>
    </location>
</feature>
<feature type="sequence variant" description="In strain: SK1." evidence="11">
    <original>R</original>
    <variation>G</variation>
    <location>
        <position position="528"/>
    </location>
</feature>
<feature type="sequence variant" description="In strain: SK1." evidence="11">
    <original>IE</original>
    <variation>MK</variation>
    <location>
        <begin position="691"/>
        <end position="692"/>
    </location>
</feature>
<feature type="sequence variant" description="In strain: SK1." evidence="11">
    <original>G</original>
    <variation>R</variation>
    <location>
        <position position="1159"/>
    </location>
</feature>
<proteinExistence type="evidence at protein level"/>
<reference key="1">
    <citation type="journal article" date="2005" name="Nat. Genet.">
        <title>Quantitative trait loci mapped to single-nucleotide resolution in yeast.</title>
        <authorList>
            <person name="Deutschbauer A.M."/>
            <person name="Davis R.W."/>
        </authorList>
    </citation>
    <scope>NUCLEOTIDE SEQUENCE [GENOMIC DNA]</scope>
    <scope>VARIANTS 11-ASP--ILE-13 DELINS GLU-GLN-VAL; SER-121; GLY-528; 691-ILE-GLU-692 DELINS MET-LYS AND ARG-1159</scope>
    <source>
        <strain>SK1</strain>
    </source>
</reference>
<reference key="2">
    <citation type="journal article" date="1996" name="Yeast">
        <title>The sequence of a 17,933 bp segment of Saccharomyces cerevisiae chromosome XIV contains the RHO2, TOP2, MKT1 and END3 genes and five new open reading frames.</title>
        <authorList>
            <person name="Soler-Mira A."/>
            <person name="Saiz J.E."/>
            <person name="Ballesta J.P.G."/>
            <person name="Remacha M.A."/>
        </authorList>
    </citation>
    <scope>NUCLEOTIDE SEQUENCE [GENOMIC DNA]</scope>
    <source>
        <strain>ATCC 96604 / S288c / FY1679</strain>
    </source>
</reference>
<reference key="3">
    <citation type="journal article" date="1997" name="Nature">
        <title>The nucleotide sequence of Saccharomyces cerevisiae chromosome XIV and its evolutionary implications.</title>
        <authorList>
            <person name="Philippsen P."/>
            <person name="Kleine K."/>
            <person name="Poehlmann R."/>
            <person name="Duesterhoeft A."/>
            <person name="Hamberg K."/>
            <person name="Hegemann J.H."/>
            <person name="Obermaier B."/>
            <person name="Urrestarazu L.A."/>
            <person name="Aert R."/>
            <person name="Albermann K."/>
            <person name="Altmann R."/>
            <person name="Andre B."/>
            <person name="Baladron V."/>
            <person name="Ballesta J.P.G."/>
            <person name="Becam A.-M."/>
            <person name="Beinhauer J.D."/>
            <person name="Boskovic J."/>
            <person name="Buitrago M.J."/>
            <person name="Bussereau F."/>
            <person name="Coster F."/>
            <person name="Crouzet M."/>
            <person name="D'Angelo M."/>
            <person name="Dal Pero F."/>
            <person name="De Antoni A."/>
            <person name="del Rey F."/>
            <person name="Doignon F."/>
            <person name="Domdey H."/>
            <person name="Dubois E."/>
            <person name="Fiedler T.A."/>
            <person name="Fleig U."/>
            <person name="Floeth M."/>
            <person name="Fritz C."/>
            <person name="Gaillardin C."/>
            <person name="Garcia-Cantalejo J.M."/>
            <person name="Glansdorff N."/>
            <person name="Goffeau A."/>
            <person name="Gueldener U."/>
            <person name="Herbert C.J."/>
            <person name="Heumann K."/>
            <person name="Heuss-Neitzel D."/>
            <person name="Hilbert H."/>
            <person name="Hinni K."/>
            <person name="Iraqui Houssaini I."/>
            <person name="Jacquet M."/>
            <person name="Jimenez A."/>
            <person name="Jonniaux J.-L."/>
            <person name="Karpfinger-Hartl L."/>
            <person name="Lanfranchi G."/>
            <person name="Lepingle A."/>
            <person name="Levesque H."/>
            <person name="Lyck R."/>
            <person name="Maftahi M."/>
            <person name="Mallet L."/>
            <person name="Maurer C.T.C."/>
            <person name="Messenguy F."/>
            <person name="Mewes H.-W."/>
            <person name="Moestl D."/>
            <person name="Nasr F."/>
            <person name="Nicaud J.-M."/>
            <person name="Niedenthal R.K."/>
            <person name="Pandolfo D."/>
            <person name="Pierard A."/>
            <person name="Piravandi E."/>
            <person name="Planta R.J."/>
            <person name="Pohl T.M."/>
            <person name="Purnelle B."/>
            <person name="Rebischung C."/>
            <person name="Remacha M.A."/>
            <person name="Revuelta J.L."/>
            <person name="Rinke M."/>
            <person name="Saiz J.E."/>
            <person name="Sartorello F."/>
            <person name="Scherens B."/>
            <person name="Sen-Gupta M."/>
            <person name="Soler-Mira A."/>
            <person name="Urbanus J.H.M."/>
            <person name="Valle G."/>
            <person name="Van Dyck L."/>
            <person name="Verhasselt P."/>
            <person name="Vierendeels F."/>
            <person name="Vissers S."/>
            <person name="Voet M."/>
            <person name="Volckaert G."/>
            <person name="Wach A."/>
            <person name="Wambutt R."/>
            <person name="Wedler H."/>
            <person name="Zollner A."/>
            <person name="Hani J."/>
        </authorList>
    </citation>
    <scope>NUCLEOTIDE SEQUENCE [LARGE SCALE GENOMIC DNA]</scope>
    <source>
        <strain>ATCC 204508 / S288c</strain>
    </source>
</reference>
<reference key="4">
    <citation type="journal article" date="2014" name="G3 (Bethesda)">
        <title>The reference genome sequence of Saccharomyces cerevisiae: Then and now.</title>
        <authorList>
            <person name="Engel S.R."/>
            <person name="Dietrich F.S."/>
            <person name="Fisk D.G."/>
            <person name="Binkley G."/>
            <person name="Balakrishnan R."/>
            <person name="Costanzo M.C."/>
            <person name="Dwight S.S."/>
            <person name="Hitz B.C."/>
            <person name="Karra K."/>
            <person name="Nash R.S."/>
            <person name="Weng S."/>
            <person name="Wong E.D."/>
            <person name="Lloyd P."/>
            <person name="Skrzypek M.S."/>
            <person name="Miyasato S.R."/>
            <person name="Simison M."/>
            <person name="Cherry J.M."/>
        </authorList>
    </citation>
    <scope>GENOME REANNOTATION</scope>
    <source>
        <strain>ATCC 204508 / S288c</strain>
    </source>
</reference>
<reference key="5">
    <citation type="journal article" date="2003" name="Nature">
        <title>Global analysis of protein localization in budding yeast.</title>
        <authorList>
            <person name="Huh W.-K."/>
            <person name="Falvo J.V."/>
            <person name="Gerke L.C."/>
            <person name="Carroll A.S."/>
            <person name="Howson R.W."/>
            <person name="Weissman J.S."/>
            <person name="O'Shea E.K."/>
        </authorList>
    </citation>
    <scope>SUBCELLULAR LOCATION [LARGE SCALE ANALYSIS]</scope>
</reference>
<reference key="6">
    <citation type="journal article" date="2003" name="Nature">
        <title>Global analysis of protein expression in yeast.</title>
        <authorList>
            <person name="Ghaemmaghami S."/>
            <person name="Huh W.-K."/>
            <person name="Bower K."/>
            <person name="Howson R.W."/>
            <person name="Belle A."/>
            <person name="Dephoure N."/>
            <person name="O'Shea E.K."/>
            <person name="Weissman J.S."/>
        </authorList>
    </citation>
    <scope>LEVEL OF PROTEIN EXPRESSION [LARGE SCALE ANALYSIS]</scope>
</reference>
<reference key="7">
    <citation type="journal article" date="2004" name="Biochemistry">
        <title>The tricalbin C2 domains: lipid-binding properties of a novel, synaptotagmin-like yeast protein family.</title>
        <authorList>
            <person name="Schulz T.A."/>
            <person name="Creutz C.E."/>
        </authorList>
    </citation>
    <scope>FUNCTION</scope>
    <scope>LIPID-BINDING</scope>
</reference>
<reference key="8">
    <citation type="journal article" date="2004" name="Cell. Mol. Life Sci.">
        <title>Characterization of the yeast tricalbins: membrane-bound multi-C2-domain proteins that form complexes involved in membrane trafficking.</title>
        <authorList>
            <person name="Creutz C.E."/>
            <person name="Snyder S.L."/>
            <person name="Schulz T.A."/>
        </authorList>
    </citation>
    <scope>FUNCTION</scope>
    <scope>SUBCELLULAR LOCATION</scope>
    <scope>INTERACTION WITH TCB1 AND TCB3</scope>
</reference>
<reference key="9">
    <citation type="journal article" date="2008" name="Mol. Cell. Proteomics">
        <title>A multidimensional chromatography technology for in-depth phosphoproteome analysis.</title>
        <authorList>
            <person name="Albuquerque C.P."/>
            <person name="Smolka M.B."/>
            <person name="Payne S.H."/>
            <person name="Bafna V."/>
            <person name="Eng J."/>
            <person name="Zhou H."/>
        </authorList>
    </citation>
    <scope>IDENTIFICATION BY MASS SPECTROMETRY [LARGE SCALE ANALYSIS]</scope>
</reference>
<reference key="10">
    <citation type="journal article" date="2012" name="J. Cell Sci.">
        <title>A conserved membrane-binding domain targets proteins to organelle contact sites.</title>
        <authorList>
            <person name="Toulmay A."/>
            <person name="Prinz W.A."/>
        </authorList>
    </citation>
    <scope>SUBCELLULAR LOCATION</scope>
    <scope>DOMAIN</scope>
</reference>
<evidence type="ECO:0000250" key="1"/>
<evidence type="ECO:0000250" key="2">
    <source>
        <dbReference type="UniProtKB" id="Q12466"/>
    </source>
</evidence>
<evidence type="ECO:0000255" key="3"/>
<evidence type="ECO:0000255" key="4">
    <source>
        <dbReference type="PROSITE-ProRule" id="PRU00041"/>
    </source>
</evidence>
<evidence type="ECO:0000255" key="5">
    <source>
        <dbReference type="PROSITE-ProRule" id="PRU01194"/>
    </source>
</evidence>
<evidence type="ECO:0000256" key="6">
    <source>
        <dbReference type="SAM" id="MobiDB-lite"/>
    </source>
</evidence>
<evidence type="ECO:0000269" key="7">
    <source>
    </source>
</evidence>
<evidence type="ECO:0000269" key="8">
    <source>
    </source>
</evidence>
<evidence type="ECO:0000269" key="9">
    <source>
    </source>
</evidence>
<evidence type="ECO:0000269" key="10">
    <source>
    </source>
</evidence>
<evidence type="ECO:0000269" key="11">
    <source>
    </source>
</evidence>
<evidence type="ECO:0000269" key="12">
    <source>
    </source>
</evidence>
<evidence type="ECO:0000305" key="13"/>
<name>TCB2_YEAST</name>
<accession>P48231</accession>
<accession>D6W192</accession>
<accession>Q45TY9</accession>
<protein>
    <recommendedName>
        <fullName>Tricalbin-2</fullName>
    </recommendedName>
</protein>
<gene>
    <name type="primary">TCB2</name>
    <name type="ordered locus">YNL087W</name>
    <name type="ORF">N2250</name>
</gene>
<organism>
    <name type="scientific">Saccharomyces cerevisiae (strain ATCC 204508 / S288c)</name>
    <name type="common">Baker's yeast</name>
    <dbReference type="NCBI Taxonomy" id="559292"/>
    <lineage>
        <taxon>Eukaryota</taxon>
        <taxon>Fungi</taxon>
        <taxon>Dikarya</taxon>
        <taxon>Ascomycota</taxon>
        <taxon>Saccharomycotina</taxon>
        <taxon>Saccharomycetes</taxon>
        <taxon>Saccharomycetales</taxon>
        <taxon>Saccharomycetaceae</taxon>
        <taxon>Saccharomyces</taxon>
    </lineage>
</organism>